<evidence type="ECO:0000255" key="1"/>
<evidence type="ECO:0000255" key="2">
    <source>
        <dbReference type="PROSITE-ProRule" id="PRU01048"/>
    </source>
</evidence>
<evidence type="ECO:0000269" key="3">
    <source>
    </source>
</evidence>
<evidence type="ECO:0000305" key="4"/>
<evidence type="ECO:0000305" key="5">
    <source>
    </source>
</evidence>
<evidence type="ECO:0007744" key="6">
    <source>
        <dbReference type="PDB" id="2WJG"/>
    </source>
</evidence>
<evidence type="ECO:0007744" key="7">
    <source>
        <dbReference type="PDB" id="2WJH"/>
    </source>
</evidence>
<evidence type="ECO:0007744" key="8">
    <source>
        <dbReference type="PDB" id="2WJI"/>
    </source>
</evidence>
<evidence type="ECO:0007744" key="9">
    <source>
        <dbReference type="PDB" id="2WJJ"/>
    </source>
</evidence>
<evidence type="ECO:0007829" key="10">
    <source>
        <dbReference type="PDB" id="2WJG"/>
    </source>
</evidence>
<evidence type="ECO:0007829" key="11">
    <source>
        <dbReference type="PDB" id="2WJH"/>
    </source>
</evidence>
<evidence type="ECO:0007829" key="12">
    <source>
        <dbReference type="PDB" id="2WJI"/>
    </source>
</evidence>
<evidence type="ECO:0007829" key="13">
    <source>
        <dbReference type="PDB" id="2WJJ"/>
    </source>
</evidence>
<protein>
    <recommendedName>
        <fullName evidence="4">Fe(2+) transporter FeoB</fullName>
    </recommendedName>
    <alternativeName>
        <fullName>Ferrous iron transport protein B</fullName>
    </alternativeName>
</protein>
<feature type="chain" id="PRO_0000210848" description="Fe(2+) transporter FeoB">
    <location>
        <begin position="1"/>
        <end position="668"/>
    </location>
</feature>
<feature type="transmembrane region" description="Helical" evidence="1">
    <location>
        <begin position="344"/>
        <end position="364"/>
    </location>
</feature>
<feature type="transmembrane region" description="Helical" evidence="1">
    <location>
        <begin position="386"/>
        <end position="406"/>
    </location>
</feature>
<feature type="transmembrane region" description="Helical" evidence="1">
    <location>
        <begin position="418"/>
        <end position="438"/>
    </location>
</feature>
<feature type="transmembrane region" description="Helical" evidence="1">
    <location>
        <begin position="450"/>
        <end position="470"/>
    </location>
</feature>
<feature type="transmembrane region" description="Helical" evidence="1">
    <location>
        <begin position="515"/>
        <end position="535"/>
    </location>
</feature>
<feature type="transmembrane region" description="Helical" evidence="1">
    <location>
        <begin position="574"/>
        <end position="594"/>
    </location>
</feature>
<feature type="transmembrane region" description="Helical" evidence="1">
    <location>
        <begin position="613"/>
        <end position="633"/>
    </location>
</feature>
<feature type="transmembrane region" description="Helical" evidence="1">
    <location>
        <begin position="643"/>
        <end position="663"/>
    </location>
</feature>
<feature type="domain" description="FeoB-type G" evidence="2">
    <location>
        <begin position="3"/>
        <end position="165"/>
    </location>
</feature>
<feature type="binding site" evidence="2 3">
    <location>
        <begin position="10"/>
        <end position="17"/>
    </location>
    <ligand>
        <name>GTP</name>
        <dbReference type="ChEBI" id="CHEBI:37565"/>
        <label>1</label>
    </ligand>
</feature>
<feature type="binding site" evidence="3 7">
    <location>
        <position position="21"/>
    </location>
    <ligand>
        <name>Mg(2+)</name>
        <dbReference type="ChEBI" id="CHEBI:18420"/>
        <label>1</label>
    </ligand>
</feature>
<feature type="binding site" evidence="3 7">
    <location>
        <position position="21"/>
    </location>
    <ligand>
        <name>Mg(2+)</name>
        <dbReference type="ChEBI" id="CHEBI:18420"/>
        <label>2</label>
    </ligand>
</feature>
<feature type="binding site" evidence="3 7">
    <location>
        <position position="22"/>
    </location>
    <ligand>
        <name>Mg(2+)</name>
        <dbReference type="ChEBI" id="CHEBI:18420"/>
        <label>1</label>
    </ligand>
</feature>
<feature type="binding site" evidence="3 7">
    <location>
        <position position="24"/>
    </location>
    <ligand>
        <name>Mg(2+)</name>
        <dbReference type="ChEBI" id="CHEBI:18420"/>
        <label>1</label>
    </ligand>
</feature>
<feature type="binding site" evidence="3 7">
    <location>
        <position position="24"/>
    </location>
    <ligand>
        <name>Mg(2+)</name>
        <dbReference type="ChEBI" id="CHEBI:18420"/>
        <label>2</label>
    </ligand>
</feature>
<feature type="binding site" evidence="3 7">
    <location>
        <position position="25"/>
    </location>
    <ligand>
        <name>Mg(2+)</name>
        <dbReference type="ChEBI" id="CHEBI:18420"/>
        <label>2</label>
    </ligand>
</feature>
<feature type="binding site" evidence="2 3">
    <location>
        <begin position="35"/>
        <end position="39"/>
    </location>
    <ligand>
        <name>GTP</name>
        <dbReference type="ChEBI" id="CHEBI:37565"/>
        <label>2</label>
    </ligand>
</feature>
<feature type="binding site" evidence="2">
    <location>
        <begin position="56"/>
        <end position="59"/>
    </location>
    <ligand>
        <name>GTP</name>
        <dbReference type="ChEBI" id="CHEBI:37565"/>
        <label>3</label>
    </ligand>
</feature>
<feature type="binding site" evidence="2 3">
    <location>
        <begin position="116"/>
        <end position="119"/>
    </location>
    <ligand>
        <name>GTP</name>
        <dbReference type="ChEBI" id="CHEBI:37565"/>
        <label>4</label>
    </ligand>
</feature>
<feature type="binding site" evidence="2 3">
    <location>
        <begin position="145"/>
        <end position="147"/>
    </location>
    <ligand>
        <name>GTP</name>
        <dbReference type="ChEBI" id="CHEBI:37565"/>
        <label>5</label>
    </ligand>
</feature>
<feature type="mutagenesis site" description="Slight decrease in GTP hydrolysis rate." evidence="3">
    <original>K</original>
    <variation>A</variation>
    <location>
        <position position="41"/>
    </location>
</feature>
<feature type="mutagenesis site" description="No change in GTP hydrolysis rate." evidence="3">
    <original>Y</original>
    <variation>F</variation>
    <location>
        <position position="61"/>
    </location>
</feature>
<feature type="strand" evidence="12">
    <location>
        <begin position="3"/>
        <end position="9"/>
    </location>
</feature>
<feature type="helix" evidence="12">
    <location>
        <begin position="16"/>
        <end position="24"/>
    </location>
</feature>
<feature type="strand" evidence="11">
    <location>
        <begin position="29"/>
        <end position="32"/>
    </location>
</feature>
<feature type="strand" evidence="12">
    <location>
        <begin position="42"/>
        <end position="47"/>
    </location>
</feature>
<feature type="strand" evidence="12">
    <location>
        <begin position="50"/>
        <end position="56"/>
    </location>
</feature>
<feature type="strand" evidence="12">
    <location>
        <begin position="63"/>
        <end position="67"/>
    </location>
</feature>
<feature type="helix" evidence="12">
    <location>
        <begin position="68"/>
        <end position="80"/>
    </location>
</feature>
<feature type="strand" evidence="12">
    <location>
        <begin position="83"/>
        <end position="90"/>
    </location>
</feature>
<feature type="helix" evidence="10">
    <location>
        <begin position="91"/>
        <end position="93"/>
    </location>
</feature>
<feature type="helix" evidence="12">
    <location>
        <begin position="94"/>
        <end position="106"/>
    </location>
</feature>
<feature type="strand" evidence="12">
    <location>
        <begin position="111"/>
        <end position="116"/>
    </location>
</feature>
<feature type="helix" evidence="12">
    <location>
        <begin position="118"/>
        <end position="123"/>
    </location>
</feature>
<feature type="helix" evidence="12">
    <location>
        <begin position="130"/>
        <end position="137"/>
    </location>
</feature>
<feature type="strand" evidence="12">
    <location>
        <begin position="141"/>
        <end position="143"/>
    </location>
</feature>
<feature type="helix" evidence="12">
    <location>
        <begin position="146"/>
        <end position="148"/>
    </location>
</feature>
<feature type="helix" evidence="12">
    <location>
        <begin position="152"/>
        <end position="162"/>
    </location>
</feature>
<feature type="helix" evidence="13">
    <location>
        <begin position="163"/>
        <end position="166"/>
    </location>
</feature>
<proteinExistence type="evidence at protein level"/>
<gene>
    <name type="ordered locus">MJ0566</name>
</gene>
<keyword id="KW-0002">3D-structure</keyword>
<keyword id="KW-1003">Cell membrane</keyword>
<keyword id="KW-0342">GTP-binding</keyword>
<keyword id="KW-0406">Ion transport</keyword>
<keyword id="KW-0408">Iron</keyword>
<keyword id="KW-0410">Iron transport</keyword>
<keyword id="KW-0460">Magnesium</keyword>
<keyword id="KW-0472">Membrane</keyword>
<keyword id="KW-0479">Metal-binding</keyword>
<keyword id="KW-0547">Nucleotide-binding</keyword>
<keyword id="KW-1185">Reference proteome</keyword>
<keyword id="KW-0812">Transmembrane</keyword>
<keyword id="KW-1133">Transmembrane helix</keyword>
<keyword id="KW-0813">Transport</keyword>
<reference key="1">
    <citation type="journal article" date="1996" name="Science">
        <title>Complete genome sequence of the methanogenic archaeon, Methanococcus jannaschii.</title>
        <authorList>
            <person name="Bult C.J."/>
            <person name="White O."/>
            <person name="Olsen G.J."/>
            <person name="Zhou L."/>
            <person name="Fleischmann R.D."/>
            <person name="Sutton G.G."/>
            <person name="Blake J.A."/>
            <person name="FitzGerald L.M."/>
            <person name="Clayton R.A."/>
            <person name="Gocayne J.D."/>
            <person name="Kerlavage A.R."/>
            <person name="Dougherty B.A."/>
            <person name="Tomb J.-F."/>
            <person name="Adams M.D."/>
            <person name="Reich C.I."/>
            <person name="Overbeek R."/>
            <person name="Kirkness E.F."/>
            <person name="Weinstock K.G."/>
            <person name="Merrick J.M."/>
            <person name="Glodek A."/>
            <person name="Scott J.L."/>
            <person name="Geoghagen N.S.M."/>
            <person name="Weidman J.F."/>
            <person name="Fuhrmann J.L."/>
            <person name="Nguyen D."/>
            <person name="Utterback T.R."/>
            <person name="Kelley J.M."/>
            <person name="Peterson J.D."/>
            <person name="Sadow P.W."/>
            <person name="Hanna M.C."/>
            <person name="Cotton M.D."/>
            <person name="Roberts K.M."/>
            <person name="Hurst M.A."/>
            <person name="Kaine B.P."/>
            <person name="Borodovsky M."/>
            <person name="Klenk H.-P."/>
            <person name="Fraser C.M."/>
            <person name="Smith H.O."/>
            <person name="Woese C.R."/>
            <person name="Venter J.C."/>
        </authorList>
    </citation>
    <scope>NUCLEOTIDE SEQUENCE [LARGE SCALE GENOMIC DNA]</scope>
    <source>
        <strain>ATCC 43067 / DSM 2661 / JAL-1 / JCM 10045 / NBRC 100440</strain>
    </source>
</reference>
<reference evidence="6 7 8 9" key="2">
    <citation type="journal article" date="2009" name="J. Mol. Biol.">
        <title>Structure and function of the FeoB G-domain from Methanococcus jannaschii.</title>
        <authorList>
            <person name="Koster S."/>
            <person name="Wehner M."/>
            <person name="Herrmann C."/>
            <person name="Kuhlbrandt W."/>
            <person name="Yildiz O."/>
        </authorList>
    </citation>
    <scope>X-RAY CRYSTALLOGRAPHY (1.90 ANGSTROMS) OF 1-165 IN COMPLEX WITH AND WITHOUT GUANINE NUCLEOTIDES</scope>
    <scope>FUNCTION</scope>
    <scope>SUBUNIT</scope>
    <scope>DOMAIN</scope>
    <scope>GDP-BINDING</scope>
    <scope>MUTAGENESIS OF LYS-41 AND TYR-61</scope>
</reference>
<comment type="function">
    <text evidence="5">Probable transporter of a GTP-driven Fe(2+) uptake system, might be able to transport Fe(2+) into or out of the cell (Probable).</text>
</comment>
<comment type="subunit">
    <text evidence="3">The crystallized N-terminal domain is a homodimer.</text>
</comment>
<comment type="subcellular location">
    <subcellularLocation>
        <location evidence="4">Cell membrane</location>
        <topology evidence="1 4">Multi-pass membrane protein</topology>
    </subcellularLocation>
</comment>
<comment type="domain">
    <text evidence="3">The G protein domain (about resides 1-184) binds GDP faster and with higher affinity than GTP and releases GTP much faster than GDP. Release of bound nucleotide causes a rearrangement of GTP-binding domain G5, which may transmit information about the nucleotide-bound state from the G-domain to the transmembrane region of FeoB and effect Fe(2+) transport.</text>
</comment>
<comment type="similarity">
    <text evidence="2">Belongs to the TRAFAC class TrmE-Era-EngA-EngB-Septin-like GTPase superfamily. FeoB GTPase (TC 9.A.8) family.</text>
</comment>
<dbReference type="EMBL" id="L77117">
    <property type="protein sequence ID" value="AAB98557.1"/>
    <property type="molecule type" value="Genomic_DNA"/>
</dbReference>
<dbReference type="PIR" id="F64370">
    <property type="entry name" value="F64370"/>
</dbReference>
<dbReference type="RefSeq" id="WP_010870070.1">
    <property type="nucleotide sequence ID" value="NC_000909.1"/>
</dbReference>
<dbReference type="PDB" id="2WJG">
    <property type="method" value="X-ray"/>
    <property type="resolution" value="2.20 A"/>
    <property type="chains" value="A/B=1-184"/>
</dbReference>
<dbReference type="PDB" id="2WJH">
    <property type="method" value="X-ray"/>
    <property type="resolution" value="2.10 A"/>
    <property type="chains" value="A/B=1-165"/>
</dbReference>
<dbReference type="PDB" id="2WJI">
    <property type="method" value="X-ray"/>
    <property type="resolution" value="1.90 A"/>
    <property type="chains" value="A/B=1-165"/>
</dbReference>
<dbReference type="PDB" id="2WJJ">
    <property type="method" value="X-ray"/>
    <property type="resolution" value="2.40 A"/>
    <property type="chains" value="A/B=1-167"/>
</dbReference>
<dbReference type="PDBsum" id="2WJG"/>
<dbReference type="PDBsum" id="2WJH"/>
<dbReference type="PDBsum" id="2WJI"/>
<dbReference type="PDBsum" id="2WJJ"/>
<dbReference type="SMR" id="Q57986"/>
<dbReference type="STRING" id="243232.MJ_0566"/>
<dbReference type="TCDB" id="9.A.8.1.9">
    <property type="family name" value="the ferrous iron uptake (feob) family"/>
</dbReference>
<dbReference type="PaxDb" id="243232-MJ_0566"/>
<dbReference type="EnsemblBacteria" id="AAB98557">
    <property type="protein sequence ID" value="AAB98557"/>
    <property type="gene ID" value="MJ_0566"/>
</dbReference>
<dbReference type="GeneID" id="1451431"/>
<dbReference type="KEGG" id="mja:MJ_0566"/>
<dbReference type="eggNOG" id="arCOG00359">
    <property type="taxonomic scope" value="Archaea"/>
</dbReference>
<dbReference type="HOGENOM" id="CLU_013350_3_0_2"/>
<dbReference type="InParanoid" id="Q57986"/>
<dbReference type="OrthoDB" id="85305at2157"/>
<dbReference type="PhylomeDB" id="Q57986"/>
<dbReference type="EvolutionaryTrace" id="Q57986"/>
<dbReference type="Proteomes" id="UP000000805">
    <property type="component" value="Chromosome"/>
</dbReference>
<dbReference type="GO" id="GO:0005886">
    <property type="term" value="C:plasma membrane"/>
    <property type="evidence" value="ECO:0000318"/>
    <property type="project" value="GO_Central"/>
</dbReference>
<dbReference type="GO" id="GO:0015093">
    <property type="term" value="F:ferrous iron transmembrane transporter activity"/>
    <property type="evidence" value="ECO:0000318"/>
    <property type="project" value="GO_Central"/>
</dbReference>
<dbReference type="GO" id="GO:0005525">
    <property type="term" value="F:GTP binding"/>
    <property type="evidence" value="ECO:0007669"/>
    <property type="project" value="UniProtKB-KW"/>
</dbReference>
<dbReference type="GO" id="GO:0046872">
    <property type="term" value="F:metal ion binding"/>
    <property type="evidence" value="ECO:0007669"/>
    <property type="project" value="UniProtKB-KW"/>
</dbReference>
<dbReference type="CDD" id="cd01879">
    <property type="entry name" value="FeoB"/>
    <property type="match status" value="1"/>
</dbReference>
<dbReference type="FunFam" id="1.10.287.1770:FF:000003">
    <property type="entry name" value="Ferrous iron transport protein B"/>
    <property type="match status" value="1"/>
</dbReference>
<dbReference type="FunFam" id="3.40.50.300:FF:000969">
    <property type="entry name" value="Ferrous iron transporter B"/>
    <property type="match status" value="1"/>
</dbReference>
<dbReference type="Gene3D" id="1.10.287.1770">
    <property type="match status" value="1"/>
</dbReference>
<dbReference type="Gene3D" id="3.40.50.300">
    <property type="entry name" value="P-loop containing nucleotide triphosphate hydrolases"/>
    <property type="match status" value="1"/>
</dbReference>
<dbReference type="InterPro" id="IPR003373">
    <property type="entry name" value="Fe2_transport_prot-B"/>
</dbReference>
<dbReference type="InterPro" id="IPR011640">
    <property type="entry name" value="Fe2_transport_prot_B_C"/>
</dbReference>
<dbReference type="InterPro" id="IPR041069">
    <property type="entry name" value="FeoB_Cyto"/>
</dbReference>
<dbReference type="InterPro" id="IPR050860">
    <property type="entry name" value="FeoB_GTPase"/>
</dbReference>
<dbReference type="InterPro" id="IPR030389">
    <property type="entry name" value="G_FEOB_dom"/>
</dbReference>
<dbReference type="InterPro" id="IPR011642">
    <property type="entry name" value="Gate_dom"/>
</dbReference>
<dbReference type="InterPro" id="IPR006073">
    <property type="entry name" value="GTP-bd"/>
</dbReference>
<dbReference type="InterPro" id="IPR027417">
    <property type="entry name" value="P-loop_NTPase"/>
</dbReference>
<dbReference type="InterPro" id="IPR005225">
    <property type="entry name" value="Small_GTP-bd"/>
</dbReference>
<dbReference type="NCBIfam" id="TIGR00437">
    <property type="entry name" value="feoB"/>
    <property type="match status" value="1"/>
</dbReference>
<dbReference type="NCBIfam" id="TIGR00231">
    <property type="entry name" value="small_GTP"/>
    <property type="match status" value="1"/>
</dbReference>
<dbReference type="PANTHER" id="PTHR43185:SF1">
    <property type="entry name" value="FE(2+) TRANSPORTER FEOB"/>
    <property type="match status" value="1"/>
</dbReference>
<dbReference type="PANTHER" id="PTHR43185">
    <property type="entry name" value="FERROUS IRON TRANSPORT PROTEIN B"/>
    <property type="match status" value="1"/>
</dbReference>
<dbReference type="Pfam" id="PF07664">
    <property type="entry name" value="FeoB_C"/>
    <property type="match status" value="1"/>
</dbReference>
<dbReference type="Pfam" id="PF17910">
    <property type="entry name" value="FeoB_Cyto"/>
    <property type="match status" value="1"/>
</dbReference>
<dbReference type="Pfam" id="PF02421">
    <property type="entry name" value="FeoB_N"/>
    <property type="match status" value="1"/>
</dbReference>
<dbReference type="Pfam" id="PF07670">
    <property type="entry name" value="Gate"/>
    <property type="match status" value="2"/>
</dbReference>
<dbReference type="PRINTS" id="PR00326">
    <property type="entry name" value="GTP1OBG"/>
</dbReference>
<dbReference type="SUPFAM" id="SSF52540">
    <property type="entry name" value="P-loop containing nucleoside triphosphate hydrolases"/>
    <property type="match status" value="1"/>
</dbReference>
<dbReference type="PROSITE" id="PS51711">
    <property type="entry name" value="G_FEOB"/>
    <property type="match status" value="1"/>
</dbReference>
<sequence length="668" mass="74455">MKSYEIALIGNPNVGKSTIFNALTGENVYIGNWPGVTVEKKEGEFEYNGEKFKVVDLPGVYSLTANSIDEIIARDYIINEKPDLVVNIVDATALERNLYLTLQLMEMGANLLLALNKMDLAKSLGIEIDVDKLEKILGVKVVPLSAAKKMGIEDLKKAISIAVKDKKTAEIKYPNFEPYIKKITSILQKDEDLKKYNLRYLAIKLLENDKYVEEIVKNSKVWNELKPVLDSIINELSKKYGEAELGIVEERYKVIDKIVKEVMKKTSGKLTTTEMLDDVLTDEKIGTLLIIPFLWMLFKFTFDVSKPFSAMIEYFFGFLSEVVKSSISNKFIASLLADGIISGVGAVLVFFPILAFLFFAISFLEDSGYMARIPFITDRIMNKFGLPGKAVISMVMGFGCNVPAIMATRTIEDEKDRILTILINPLLSCSARLPIYALFAGALFSKYQGVVILSMYALGVVLALITAFLFRKLIFKTSPSYLIVELPPYHIPHLNVVLKNTWERVYDFLRKAGTIIVFGVILVWVLSVYGPSGYLGEEVFENPQLIANSWVAVIGKTLAPLFSPMGWDWRACSALVFGIIAKEVVVGSLAMLYGTGEENLSSVIAHAFSPVSAYAFMAFSLIYLPCIATLAVIKQEIGWKWALFAVTYEMILAYVVALVISVIGNLLF</sequence>
<organism>
    <name type="scientific">Methanocaldococcus jannaschii (strain ATCC 43067 / DSM 2661 / JAL-1 / JCM 10045 / NBRC 100440)</name>
    <name type="common">Methanococcus jannaschii</name>
    <dbReference type="NCBI Taxonomy" id="243232"/>
    <lineage>
        <taxon>Archaea</taxon>
        <taxon>Methanobacteriati</taxon>
        <taxon>Methanobacteriota</taxon>
        <taxon>Methanomada group</taxon>
        <taxon>Methanococci</taxon>
        <taxon>Methanococcales</taxon>
        <taxon>Methanocaldococcaceae</taxon>
        <taxon>Methanocaldococcus</taxon>
    </lineage>
</organism>
<accession>Q57986</accession>
<name>FEOB_METJA</name>